<proteinExistence type="inferred from homology"/>
<accession>A4FWY7</accession>
<keyword id="KW-0413">Isomerase</keyword>
<feature type="chain" id="PRO_1000016948" description="Ribose-5-phosphate isomerase A">
    <location>
        <begin position="1"/>
        <end position="239"/>
    </location>
</feature>
<feature type="active site" description="Proton acceptor" evidence="1">
    <location>
        <position position="119"/>
    </location>
</feature>
<feature type="binding site" evidence="1">
    <location>
        <begin position="40"/>
        <end position="43"/>
    </location>
    <ligand>
        <name>substrate</name>
    </ligand>
</feature>
<feature type="binding site" evidence="1">
    <location>
        <begin position="96"/>
        <end position="99"/>
    </location>
    <ligand>
        <name>substrate</name>
    </ligand>
</feature>
<feature type="binding site" evidence="1">
    <location>
        <begin position="110"/>
        <end position="113"/>
    </location>
    <ligand>
        <name>substrate</name>
    </ligand>
</feature>
<feature type="binding site" evidence="1">
    <location>
        <position position="137"/>
    </location>
    <ligand>
        <name>substrate</name>
    </ligand>
</feature>
<comment type="function">
    <text evidence="1">Catalyzes the reversible conversion of ribose-5-phosphate to ribulose 5-phosphate.</text>
</comment>
<comment type="catalytic activity">
    <reaction evidence="1">
        <text>aldehydo-D-ribose 5-phosphate = D-ribulose 5-phosphate</text>
        <dbReference type="Rhea" id="RHEA:14657"/>
        <dbReference type="ChEBI" id="CHEBI:58121"/>
        <dbReference type="ChEBI" id="CHEBI:58273"/>
        <dbReference type="EC" id="5.3.1.6"/>
    </reaction>
</comment>
<comment type="pathway">
    <text evidence="1">Carbohydrate degradation; pentose phosphate pathway; D-ribose 5-phosphate from D-ribulose 5-phosphate (non-oxidative stage): step 1/1.</text>
</comment>
<comment type="subunit">
    <text evidence="1">Homodimer.</text>
</comment>
<comment type="similarity">
    <text evidence="1">Belongs to the ribose 5-phosphate isomerase family.</text>
</comment>
<evidence type="ECO:0000255" key="1">
    <source>
        <dbReference type="HAMAP-Rule" id="MF_00170"/>
    </source>
</evidence>
<protein>
    <recommendedName>
        <fullName evidence="1">Ribose-5-phosphate isomerase A</fullName>
        <ecNumber evidence="1">5.3.1.6</ecNumber>
    </recommendedName>
    <alternativeName>
        <fullName evidence="1">Phosphoriboisomerase A</fullName>
        <shortName evidence="1">PRI</shortName>
    </alternativeName>
</protein>
<reference key="1">
    <citation type="submission" date="2007-03" db="EMBL/GenBank/DDBJ databases">
        <title>Complete sequence of chromosome of Methanococcus maripaludis C5.</title>
        <authorList>
            <consortium name="US DOE Joint Genome Institute"/>
            <person name="Copeland A."/>
            <person name="Lucas S."/>
            <person name="Lapidus A."/>
            <person name="Barry K."/>
            <person name="Glavina del Rio T."/>
            <person name="Dalin E."/>
            <person name="Tice H."/>
            <person name="Pitluck S."/>
            <person name="Chertkov O."/>
            <person name="Brettin T."/>
            <person name="Bruce D."/>
            <person name="Han C."/>
            <person name="Detter J.C."/>
            <person name="Schmutz J."/>
            <person name="Larimer F."/>
            <person name="Land M."/>
            <person name="Hauser L."/>
            <person name="Kyrpides N."/>
            <person name="Mikhailova N."/>
            <person name="Sieprawska-Lupa M."/>
            <person name="Whitman W.B."/>
            <person name="Richardson P."/>
        </authorList>
    </citation>
    <scope>NUCLEOTIDE SEQUENCE [LARGE SCALE GENOMIC DNA]</scope>
    <source>
        <strain>C5 / ATCC BAA-1333</strain>
    </source>
</reference>
<name>RPIA_METM5</name>
<sequence length="239" mass="25565">MARTKKANDEVPTNSDSLKLKVAKQAAKLVKDEMVVGLGSGSTANLFIQELGKRIVEEELYIYGVPTSFDSRMVASTAGIPLISLDQCGEIDIAVDGADEVCKSTLSLIKGGGGCHTMEKIVDYHAKEFIVLADEGKLVDSLGDKTPVPLEVIPFAYSTVLNKLLKMNTAPAIRTGSGKMGPVITDSGNMIIDVFISIDDAEETENMLNNIPGVLENGVFSKCDKVLVGTSKKVEILKK</sequence>
<dbReference type="EC" id="5.3.1.6" evidence="1"/>
<dbReference type="EMBL" id="CP000609">
    <property type="protein sequence ID" value="ABO34716.1"/>
    <property type="molecule type" value="Genomic_DNA"/>
</dbReference>
<dbReference type="RefSeq" id="WP_011868171.1">
    <property type="nucleotide sequence ID" value="NC_009135.1"/>
</dbReference>
<dbReference type="SMR" id="A4FWY7"/>
<dbReference type="STRING" id="402880.MmarC5_0401"/>
<dbReference type="GeneID" id="4927896"/>
<dbReference type="KEGG" id="mmq:MmarC5_0401"/>
<dbReference type="eggNOG" id="arCOG01122">
    <property type="taxonomic scope" value="Archaea"/>
</dbReference>
<dbReference type="HOGENOM" id="CLU_056590_1_1_2"/>
<dbReference type="OrthoDB" id="19013at2157"/>
<dbReference type="UniPathway" id="UPA00115">
    <property type="reaction ID" value="UER00412"/>
</dbReference>
<dbReference type="Proteomes" id="UP000000253">
    <property type="component" value="Chromosome"/>
</dbReference>
<dbReference type="GO" id="GO:0005829">
    <property type="term" value="C:cytosol"/>
    <property type="evidence" value="ECO:0007669"/>
    <property type="project" value="TreeGrafter"/>
</dbReference>
<dbReference type="GO" id="GO:0004751">
    <property type="term" value="F:ribose-5-phosphate isomerase activity"/>
    <property type="evidence" value="ECO:0007669"/>
    <property type="project" value="UniProtKB-UniRule"/>
</dbReference>
<dbReference type="GO" id="GO:0006014">
    <property type="term" value="P:D-ribose metabolic process"/>
    <property type="evidence" value="ECO:0007669"/>
    <property type="project" value="TreeGrafter"/>
</dbReference>
<dbReference type="GO" id="GO:0009052">
    <property type="term" value="P:pentose-phosphate shunt, non-oxidative branch"/>
    <property type="evidence" value="ECO:0007669"/>
    <property type="project" value="UniProtKB-UniRule"/>
</dbReference>
<dbReference type="CDD" id="cd01398">
    <property type="entry name" value="RPI_A"/>
    <property type="match status" value="1"/>
</dbReference>
<dbReference type="FunFam" id="3.40.50.1360:FF:000001">
    <property type="entry name" value="Ribose-5-phosphate isomerase A"/>
    <property type="match status" value="1"/>
</dbReference>
<dbReference type="Gene3D" id="3.30.70.260">
    <property type="match status" value="1"/>
</dbReference>
<dbReference type="Gene3D" id="3.40.50.1360">
    <property type="match status" value="1"/>
</dbReference>
<dbReference type="HAMAP" id="MF_00170">
    <property type="entry name" value="Rib_5P_isom_A"/>
    <property type="match status" value="1"/>
</dbReference>
<dbReference type="InterPro" id="IPR037171">
    <property type="entry name" value="NagB/RpiA_transferase-like"/>
</dbReference>
<dbReference type="InterPro" id="IPR020672">
    <property type="entry name" value="Ribose5P_isomerase_typA_subgr"/>
</dbReference>
<dbReference type="InterPro" id="IPR004788">
    <property type="entry name" value="Ribose5P_isomerase_type_A"/>
</dbReference>
<dbReference type="NCBIfam" id="NF001924">
    <property type="entry name" value="PRK00702.1"/>
    <property type="match status" value="1"/>
</dbReference>
<dbReference type="NCBIfam" id="TIGR00021">
    <property type="entry name" value="rpiA"/>
    <property type="match status" value="1"/>
</dbReference>
<dbReference type="PANTHER" id="PTHR11934">
    <property type="entry name" value="RIBOSE-5-PHOSPHATE ISOMERASE"/>
    <property type="match status" value="1"/>
</dbReference>
<dbReference type="PANTHER" id="PTHR11934:SF0">
    <property type="entry name" value="RIBOSE-5-PHOSPHATE ISOMERASE"/>
    <property type="match status" value="1"/>
</dbReference>
<dbReference type="Pfam" id="PF06026">
    <property type="entry name" value="Rib_5-P_isom_A"/>
    <property type="match status" value="1"/>
</dbReference>
<dbReference type="SUPFAM" id="SSF75445">
    <property type="entry name" value="D-ribose-5-phosphate isomerase (RpiA), lid domain"/>
    <property type="match status" value="1"/>
</dbReference>
<dbReference type="SUPFAM" id="SSF100950">
    <property type="entry name" value="NagB/RpiA/CoA transferase-like"/>
    <property type="match status" value="1"/>
</dbReference>
<gene>
    <name evidence="1" type="primary">rpiA</name>
    <name type="ordered locus">MmarC5_0401</name>
</gene>
<organism>
    <name type="scientific">Methanococcus maripaludis (strain C5 / ATCC BAA-1333)</name>
    <dbReference type="NCBI Taxonomy" id="402880"/>
    <lineage>
        <taxon>Archaea</taxon>
        <taxon>Methanobacteriati</taxon>
        <taxon>Methanobacteriota</taxon>
        <taxon>Methanomada group</taxon>
        <taxon>Methanococci</taxon>
        <taxon>Methanococcales</taxon>
        <taxon>Methanococcaceae</taxon>
        <taxon>Methanococcus</taxon>
    </lineage>
</organism>